<comment type="function">
    <text>Enzyme that catalyzes the hydrolysis of both DNA and RNA at the 5'-position of the phosphodiester bond.</text>
</comment>
<comment type="catalytic activity">
    <reaction evidence="4 5">
        <text>Endonucleolytic cleavage to nucleoside 3'-phosphates and 3'-phosphooligonucleotide end-products.</text>
        <dbReference type="EC" id="3.1.31.1"/>
    </reaction>
</comment>
<comment type="cofactor">
    <cofactor evidence="1">
        <name>Ca(2+)</name>
        <dbReference type="ChEBI" id="CHEBI:29108"/>
    </cofactor>
</comment>
<comment type="subcellular location">
    <subcellularLocation>
        <location evidence="6">Secreted</location>
    </subcellularLocation>
</comment>
<comment type="similarity">
    <text evidence="3">Belongs to the thermonuclease family.</text>
</comment>
<proteinExistence type="inferred from homology"/>
<gene>
    <name type="primary">nucI</name>
    <name type="synonym">nuc</name>
</gene>
<dbReference type="EC" id="3.1.31.1"/>
<dbReference type="EMBL" id="X67678">
    <property type="protein sequence ID" value="CAA47910.1"/>
    <property type="molecule type" value="Genomic_DNA"/>
</dbReference>
<dbReference type="PIR" id="S26079">
    <property type="entry name" value="S26079"/>
</dbReference>
<dbReference type="SMR" id="P43269"/>
<dbReference type="eggNOG" id="COG1525">
    <property type="taxonomic scope" value="Bacteria"/>
</dbReference>
<dbReference type="GO" id="GO:0005576">
    <property type="term" value="C:extracellular region"/>
    <property type="evidence" value="ECO:0007669"/>
    <property type="project" value="UniProtKB-SubCell"/>
</dbReference>
<dbReference type="GO" id="GO:0016894">
    <property type="term" value="F:endonuclease activity, active with either ribo- or deoxyribonucleic acids and producing 3'-phosphomonoesters"/>
    <property type="evidence" value="ECO:0007669"/>
    <property type="project" value="UniProtKB-EC"/>
</dbReference>
<dbReference type="GO" id="GO:0003676">
    <property type="term" value="F:nucleic acid binding"/>
    <property type="evidence" value="ECO:0007669"/>
    <property type="project" value="InterPro"/>
</dbReference>
<dbReference type="CDD" id="cd00175">
    <property type="entry name" value="SNc"/>
    <property type="match status" value="1"/>
</dbReference>
<dbReference type="Gene3D" id="2.40.50.90">
    <property type="match status" value="1"/>
</dbReference>
<dbReference type="InterPro" id="IPR035437">
    <property type="entry name" value="SNase_OB-fold_sf"/>
</dbReference>
<dbReference type="InterPro" id="IPR016071">
    <property type="entry name" value="Staphylococal_nuclease_OB-fold"/>
</dbReference>
<dbReference type="InterPro" id="IPR002071">
    <property type="entry name" value="Thermonucl_AS"/>
</dbReference>
<dbReference type="NCBIfam" id="NF047694">
    <property type="entry name" value="TnucaseNucIStaph"/>
    <property type="match status" value="1"/>
</dbReference>
<dbReference type="PANTHER" id="PTHR12302">
    <property type="entry name" value="EBNA2 BINDING PROTEIN P100"/>
    <property type="match status" value="1"/>
</dbReference>
<dbReference type="PANTHER" id="PTHR12302:SF3">
    <property type="entry name" value="SERINE_THREONINE-PROTEIN KINASE 31"/>
    <property type="match status" value="1"/>
</dbReference>
<dbReference type="Pfam" id="PF00565">
    <property type="entry name" value="SNase"/>
    <property type="match status" value="1"/>
</dbReference>
<dbReference type="SMART" id="SM00318">
    <property type="entry name" value="SNc"/>
    <property type="match status" value="1"/>
</dbReference>
<dbReference type="SUPFAM" id="SSF50199">
    <property type="entry name" value="Staphylococcal nuclease"/>
    <property type="match status" value="1"/>
</dbReference>
<dbReference type="PROSITE" id="PS01123">
    <property type="entry name" value="TNASE_1"/>
    <property type="match status" value="1"/>
</dbReference>
<dbReference type="PROSITE" id="PS01284">
    <property type="entry name" value="TNASE_2"/>
    <property type="match status" value="1"/>
</dbReference>
<dbReference type="PROSITE" id="PS50830">
    <property type="entry name" value="TNASE_3"/>
    <property type="match status" value="1"/>
</dbReference>
<sequence length="168" mass="19299">MKKITTGVLILAIAIVVLIFQYINGDGPFKKSSTDVRGESYLVKRVIDGDTIIIDKDGQDERVRLIGVDTPETVKPNTPVQPYGKAASNFTKKHLTNQRVRLEYDREPKDKYGRTLAYVWLGDEMFNVKLAKEGLARAKFYPPNDKYRILIEQAQKEAQKKQLNIWER</sequence>
<feature type="signal peptide" evidence="2">
    <location>
        <begin position="1"/>
        <end position="27"/>
    </location>
</feature>
<feature type="chain" id="PRO_0000034393" description="Thermonuclease">
    <location>
        <begin position="28"/>
        <end position="168"/>
    </location>
</feature>
<feature type="active site" evidence="1">
    <location>
        <position position="64"/>
    </location>
</feature>
<feature type="active site" evidence="1">
    <location>
        <position position="72"/>
    </location>
</feature>
<feature type="active site" evidence="1">
    <location>
        <position position="114"/>
    </location>
</feature>
<keyword id="KW-0106">Calcium</keyword>
<keyword id="KW-0255">Endonuclease</keyword>
<keyword id="KW-0378">Hydrolase</keyword>
<keyword id="KW-0540">Nuclease</keyword>
<keyword id="KW-0964">Secreted</keyword>
<keyword id="KW-0732">Signal</keyword>
<organism>
    <name type="scientific">Staphylococcus intermedius</name>
    <dbReference type="NCBI Taxonomy" id="1285"/>
    <lineage>
        <taxon>Bacteria</taxon>
        <taxon>Bacillati</taxon>
        <taxon>Bacillota</taxon>
        <taxon>Bacilli</taxon>
        <taxon>Bacillales</taxon>
        <taxon>Staphylococcaceae</taxon>
        <taxon>Staphylococcus</taxon>
        <taxon>Staphylococcus intermedius group</taxon>
    </lineage>
</organism>
<evidence type="ECO:0000250" key="1"/>
<evidence type="ECO:0000255" key="2"/>
<evidence type="ECO:0000255" key="3">
    <source>
        <dbReference type="PROSITE-ProRule" id="PRU00272"/>
    </source>
</evidence>
<evidence type="ECO:0000255" key="4">
    <source>
        <dbReference type="PROSITE-ProRule" id="PRU10048"/>
    </source>
</evidence>
<evidence type="ECO:0000255" key="5">
    <source>
        <dbReference type="PROSITE-ProRule" id="PRU10049"/>
    </source>
</evidence>
<evidence type="ECO:0000305" key="6"/>
<protein>
    <recommendedName>
        <fullName>Thermonuclease</fullName>
        <shortName>TNase</shortName>
        <ecNumber>3.1.31.1</ecNumber>
    </recommendedName>
    <alternativeName>
        <fullName>Micrococcal nuclease</fullName>
    </alternativeName>
    <alternativeName>
        <fullName>Staphylococcal nuclease</fullName>
    </alternativeName>
</protein>
<name>NUC_STAIN</name>
<accession>P43269</accession>
<reference key="1">
    <citation type="journal article" date="1992" name="Nucleic Acids Res.">
        <title>Nucleotide sequence of a nuc gene encoding the thermonuclease of Staphylococcus intermedius.</title>
        <authorList>
            <person name="Chesneau O."/>
            <person name="el Solh N."/>
        </authorList>
    </citation>
    <scope>NUCLEOTIDE SEQUENCE [GENOMIC DNA]</scope>
    <source>
        <strain>LRA076</strain>
    </source>
</reference>